<feature type="chain" id="PRO_0000374120" description="tRNA-2-methylthio-N(6)-dimethylallyladenosine synthase">
    <location>
        <begin position="1"/>
        <end position="445"/>
    </location>
</feature>
<feature type="domain" description="MTTase N-terminal" evidence="1">
    <location>
        <begin position="2"/>
        <end position="119"/>
    </location>
</feature>
<feature type="domain" description="Radical SAM core" evidence="2">
    <location>
        <begin position="142"/>
        <end position="378"/>
    </location>
</feature>
<feature type="domain" description="TRAM" evidence="1">
    <location>
        <begin position="379"/>
        <end position="442"/>
    </location>
</feature>
<feature type="binding site" evidence="1">
    <location>
        <position position="11"/>
    </location>
    <ligand>
        <name>[4Fe-4S] cluster</name>
        <dbReference type="ChEBI" id="CHEBI:49883"/>
        <label>1</label>
    </ligand>
</feature>
<feature type="binding site" evidence="1">
    <location>
        <position position="48"/>
    </location>
    <ligand>
        <name>[4Fe-4S] cluster</name>
        <dbReference type="ChEBI" id="CHEBI:49883"/>
        <label>1</label>
    </ligand>
</feature>
<feature type="binding site" evidence="1">
    <location>
        <position position="82"/>
    </location>
    <ligand>
        <name>[4Fe-4S] cluster</name>
        <dbReference type="ChEBI" id="CHEBI:49883"/>
        <label>1</label>
    </ligand>
</feature>
<feature type="binding site" evidence="1">
    <location>
        <position position="156"/>
    </location>
    <ligand>
        <name>[4Fe-4S] cluster</name>
        <dbReference type="ChEBI" id="CHEBI:49883"/>
        <label>2</label>
        <note>4Fe-4S-S-AdoMet</note>
    </ligand>
</feature>
<feature type="binding site" evidence="1">
    <location>
        <position position="160"/>
    </location>
    <ligand>
        <name>[4Fe-4S] cluster</name>
        <dbReference type="ChEBI" id="CHEBI:49883"/>
        <label>2</label>
        <note>4Fe-4S-S-AdoMet</note>
    </ligand>
</feature>
<feature type="binding site" evidence="1">
    <location>
        <position position="163"/>
    </location>
    <ligand>
        <name>[4Fe-4S] cluster</name>
        <dbReference type="ChEBI" id="CHEBI:49883"/>
        <label>2</label>
        <note>4Fe-4S-S-AdoMet</note>
    </ligand>
</feature>
<proteinExistence type="inferred from homology"/>
<name>MIAB_AROAE</name>
<comment type="function">
    <text evidence="1">Catalyzes the methylthiolation of N6-(dimethylallyl)adenosine (i(6)A), leading to the formation of 2-methylthio-N6-(dimethylallyl)adenosine (ms(2)i(6)A) at position 37 in tRNAs that read codons beginning with uridine.</text>
</comment>
<comment type="catalytic activity">
    <reaction evidence="1">
        <text>N(6)-dimethylallyladenosine(37) in tRNA + (sulfur carrier)-SH + AH2 + 2 S-adenosyl-L-methionine = 2-methylsulfanyl-N(6)-dimethylallyladenosine(37) in tRNA + (sulfur carrier)-H + 5'-deoxyadenosine + L-methionine + A + S-adenosyl-L-homocysteine + 2 H(+)</text>
        <dbReference type="Rhea" id="RHEA:37067"/>
        <dbReference type="Rhea" id="RHEA-COMP:10375"/>
        <dbReference type="Rhea" id="RHEA-COMP:10376"/>
        <dbReference type="Rhea" id="RHEA-COMP:14737"/>
        <dbReference type="Rhea" id="RHEA-COMP:14739"/>
        <dbReference type="ChEBI" id="CHEBI:13193"/>
        <dbReference type="ChEBI" id="CHEBI:15378"/>
        <dbReference type="ChEBI" id="CHEBI:17319"/>
        <dbReference type="ChEBI" id="CHEBI:17499"/>
        <dbReference type="ChEBI" id="CHEBI:29917"/>
        <dbReference type="ChEBI" id="CHEBI:57844"/>
        <dbReference type="ChEBI" id="CHEBI:57856"/>
        <dbReference type="ChEBI" id="CHEBI:59789"/>
        <dbReference type="ChEBI" id="CHEBI:64428"/>
        <dbReference type="ChEBI" id="CHEBI:74415"/>
        <dbReference type="ChEBI" id="CHEBI:74417"/>
        <dbReference type="EC" id="2.8.4.3"/>
    </reaction>
</comment>
<comment type="cofactor">
    <cofactor evidence="1">
        <name>[4Fe-4S] cluster</name>
        <dbReference type="ChEBI" id="CHEBI:49883"/>
    </cofactor>
    <text evidence="1">Binds 2 [4Fe-4S] clusters. One cluster is coordinated with 3 cysteines and an exchangeable S-adenosyl-L-methionine.</text>
</comment>
<comment type="subunit">
    <text evidence="1">Monomer.</text>
</comment>
<comment type="subcellular location">
    <subcellularLocation>
        <location evidence="1">Cytoplasm</location>
    </subcellularLocation>
</comment>
<comment type="similarity">
    <text evidence="1">Belongs to the methylthiotransferase family. MiaB subfamily.</text>
</comment>
<keyword id="KW-0004">4Fe-4S</keyword>
<keyword id="KW-0963">Cytoplasm</keyword>
<keyword id="KW-0408">Iron</keyword>
<keyword id="KW-0411">Iron-sulfur</keyword>
<keyword id="KW-0479">Metal-binding</keyword>
<keyword id="KW-1185">Reference proteome</keyword>
<keyword id="KW-0949">S-adenosyl-L-methionine</keyword>
<keyword id="KW-0808">Transferase</keyword>
<keyword id="KW-0819">tRNA processing</keyword>
<reference key="1">
    <citation type="journal article" date="2005" name="Arch. Microbiol.">
        <title>The genome sequence of an anaerobic aromatic-degrading denitrifying bacterium, strain EbN1.</title>
        <authorList>
            <person name="Rabus R."/>
            <person name="Kube M."/>
            <person name="Heider J."/>
            <person name="Beck A."/>
            <person name="Heitmann K."/>
            <person name="Widdel F."/>
            <person name="Reinhardt R."/>
        </authorList>
    </citation>
    <scope>NUCLEOTIDE SEQUENCE [LARGE SCALE GENOMIC DNA]</scope>
    <source>
        <strain>DSM 19018 / LMG 30748 / EbN1</strain>
    </source>
</reference>
<gene>
    <name evidence="1" type="primary">miaB</name>
    <name type="ordered locus">AZOSEA07280</name>
    <name type="ORF">ebA1339</name>
</gene>
<sequence>MKKLYIRTFGCQMNEYDSDKMADVLGASEELVKTDNPEEADVILFNTCSVREKAQERVFHDLGRVKHLKQSNPNLIIGVGGCVASQEGDAIVARAPYVDVVFGPQTLHRLPQLIAERRHSGRSQVDISFPEIEKFDNMPPARVEGASAFVSIMEGCSKYCTFCVVPYTRGEEVSRPLDDVLAEVAGLAGQGVREVTLLGQNVNAWRGEITRDGGEQGDFAFLLECVAEIPGIERLRFTTSHPREMTQRVFDAYAKIPKLVSHLHLPVQSGSDRILAAMKRGYSVLEFKSVVRKLRAARPDLSLSSDFIVGFPGETEEDFEKTMKLIDEVGFDASFSFVYSPRPGTPASDLADPVPQETKLRWLARLQKRIDQQAQAISQAMVGRVERALVEGLSRKDATELAARTGNNRVVNFVGNPRLIGQFVDLTITAALPHSLRGEIVTTET</sequence>
<dbReference type="EC" id="2.8.4.3" evidence="1"/>
<dbReference type="EMBL" id="CR555306">
    <property type="protein sequence ID" value="CAI06851.1"/>
    <property type="molecule type" value="Genomic_DNA"/>
</dbReference>
<dbReference type="RefSeq" id="WP_011236579.1">
    <property type="nucleotide sequence ID" value="NC_006513.1"/>
</dbReference>
<dbReference type="SMR" id="Q5P760"/>
<dbReference type="STRING" id="76114.ebA1339"/>
<dbReference type="KEGG" id="eba:ebA1339"/>
<dbReference type="eggNOG" id="COG0621">
    <property type="taxonomic scope" value="Bacteria"/>
</dbReference>
<dbReference type="HOGENOM" id="CLU_018697_2_0_4"/>
<dbReference type="OrthoDB" id="9805215at2"/>
<dbReference type="Proteomes" id="UP000006552">
    <property type="component" value="Chromosome"/>
</dbReference>
<dbReference type="GO" id="GO:0005829">
    <property type="term" value="C:cytosol"/>
    <property type="evidence" value="ECO:0007669"/>
    <property type="project" value="TreeGrafter"/>
</dbReference>
<dbReference type="GO" id="GO:0051539">
    <property type="term" value="F:4 iron, 4 sulfur cluster binding"/>
    <property type="evidence" value="ECO:0007669"/>
    <property type="project" value="UniProtKB-UniRule"/>
</dbReference>
<dbReference type="GO" id="GO:0046872">
    <property type="term" value="F:metal ion binding"/>
    <property type="evidence" value="ECO:0007669"/>
    <property type="project" value="UniProtKB-KW"/>
</dbReference>
<dbReference type="GO" id="GO:0035597">
    <property type="term" value="F:N6-isopentenyladenosine methylthiotransferase activity"/>
    <property type="evidence" value="ECO:0007669"/>
    <property type="project" value="TreeGrafter"/>
</dbReference>
<dbReference type="CDD" id="cd01335">
    <property type="entry name" value="Radical_SAM"/>
    <property type="match status" value="1"/>
</dbReference>
<dbReference type="FunFam" id="3.40.50.12160:FF:000001">
    <property type="entry name" value="tRNA-2-methylthio-N(6)-dimethylallyladenosine synthase"/>
    <property type="match status" value="1"/>
</dbReference>
<dbReference type="FunFam" id="3.80.30.20:FF:000001">
    <property type="entry name" value="tRNA-2-methylthio-N(6)-dimethylallyladenosine synthase 2"/>
    <property type="match status" value="1"/>
</dbReference>
<dbReference type="Gene3D" id="3.40.50.12160">
    <property type="entry name" value="Methylthiotransferase, N-terminal domain"/>
    <property type="match status" value="1"/>
</dbReference>
<dbReference type="Gene3D" id="3.80.30.20">
    <property type="entry name" value="tm_1862 like domain"/>
    <property type="match status" value="1"/>
</dbReference>
<dbReference type="HAMAP" id="MF_01864">
    <property type="entry name" value="tRNA_metthiotr_MiaB"/>
    <property type="match status" value="1"/>
</dbReference>
<dbReference type="InterPro" id="IPR006638">
    <property type="entry name" value="Elp3/MiaA/NifB-like_rSAM"/>
</dbReference>
<dbReference type="InterPro" id="IPR005839">
    <property type="entry name" value="Methylthiotransferase"/>
</dbReference>
<dbReference type="InterPro" id="IPR020612">
    <property type="entry name" value="Methylthiotransferase_CS"/>
</dbReference>
<dbReference type="InterPro" id="IPR013848">
    <property type="entry name" value="Methylthiotransferase_N"/>
</dbReference>
<dbReference type="InterPro" id="IPR038135">
    <property type="entry name" value="Methylthiotransferase_N_sf"/>
</dbReference>
<dbReference type="InterPro" id="IPR006463">
    <property type="entry name" value="MiaB_methiolase"/>
</dbReference>
<dbReference type="InterPro" id="IPR007197">
    <property type="entry name" value="rSAM"/>
</dbReference>
<dbReference type="InterPro" id="IPR023404">
    <property type="entry name" value="rSAM_horseshoe"/>
</dbReference>
<dbReference type="InterPro" id="IPR002792">
    <property type="entry name" value="TRAM_dom"/>
</dbReference>
<dbReference type="NCBIfam" id="TIGR01574">
    <property type="entry name" value="miaB-methiolase"/>
    <property type="match status" value="1"/>
</dbReference>
<dbReference type="NCBIfam" id="TIGR00089">
    <property type="entry name" value="MiaB/RimO family radical SAM methylthiotransferase"/>
    <property type="match status" value="1"/>
</dbReference>
<dbReference type="PANTHER" id="PTHR43020">
    <property type="entry name" value="CDK5 REGULATORY SUBUNIT-ASSOCIATED PROTEIN 1"/>
    <property type="match status" value="1"/>
</dbReference>
<dbReference type="PANTHER" id="PTHR43020:SF2">
    <property type="entry name" value="MITOCHONDRIAL TRNA METHYLTHIOTRANSFERASE CDK5RAP1"/>
    <property type="match status" value="1"/>
</dbReference>
<dbReference type="Pfam" id="PF04055">
    <property type="entry name" value="Radical_SAM"/>
    <property type="match status" value="1"/>
</dbReference>
<dbReference type="Pfam" id="PF01938">
    <property type="entry name" value="TRAM"/>
    <property type="match status" value="1"/>
</dbReference>
<dbReference type="Pfam" id="PF00919">
    <property type="entry name" value="UPF0004"/>
    <property type="match status" value="1"/>
</dbReference>
<dbReference type="SFLD" id="SFLDF00273">
    <property type="entry name" value="(dimethylallyl)adenosine_tRNA"/>
    <property type="match status" value="1"/>
</dbReference>
<dbReference type="SFLD" id="SFLDG01082">
    <property type="entry name" value="B12-binding_domain_containing"/>
    <property type="match status" value="1"/>
</dbReference>
<dbReference type="SFLD" id="SFLDS00029">
    <property type="entry name" value="Radical_SAM"/>
    <property type="match status" value="1"/>
</dbReference>
<dbReference type="SMART" id="SM00729">
    <property type="entry name" value="Elp3"/>
    <property type="match status" value="1"/>
</dbReference>
<dbReference type="SUPFAM" id="SSF102114">
    <property type="entry name" value="Radical SAM enzymes"/>
    <property type="match status" value="1"/>
</dbReference>
<dbReference type="PROSITE" id="PS51449">
    <property type="entry name" value="MTTASE_N"/>
    <property type="match status" value="1"/>
</dbReference>
<dbReference type="PROSITE" id="PS01278">
    <property type="entry name" value="MTTASE_RADICAL"/>
    <property type="match status" value="1"/>
</dbReference>
<dbReference type="PROSITE" id="PS51918">
    <property type="entry name" value="RADICAL_SAM"/>
    <property type="match status" value="1"/>
</dbReference>
<dbReference type="PROSITE" id="PS50926">
    <property type="entry name" value="TRAM"/>
    <property type="match status" value="1"/>
</dbReference>
<evidence type="ECO:0000255" key="1">
    <source>
        <dbReference type="HAMAP-Rule" id="MF_01864"/>
    </source>
</evidence>
<evidence type="ECO:0000255" key="2">
    <source>
        <dbReference type="PROSITE-ProRule" id="PRU01266"/>
    </source>
</evidence>
<accession>Q5P760</accession>
<organism>
    <name type="scientific">Aromatoleum aromaticum (strain DSM 19018 / LMG 30748 / EbN1)</name>
    <name type="common">Azoarcus sp. (strain EbN1)</name>
    <dbReference type="NCBI Taxonomy" id="76114"/>
    <lineage>
        <taxon>Bacteria</taxon>
        <taxon>Pseudomonadati</taxon>
        <taxon>Pseudomonadota</taxon>
        <taxon>Betaproteobacteria</taxon>
        <taxon>Rhodocyclales</taxon>
        <taxon>Rhodocyclaceae</taxon>
        <taxon>Aromatoleum</taxon>
    </lineage>
</organism>
<protein>
    <recommendedName>
        <fullName evidence="1">tRNA-2-methylthio-N(6)-dimethylallyladenosine synthase</fullName>
        <ecNumber evidence="1">2.8.4.3</ecNumber>
    </recommendedName>
    <alternativeName>
        <fullName evidence="1">(Dimethylallyl)adenosine tRNA methylthiotransferase MiaB</fullName>
    </alternativeName>
    <alternativeName>
        <fullName evidence="1">tRNA-i(6)A37 methylthiotransferase</fullName>
    </alternativeName>
</protein>